<sequence>MPENVASRSGPPAAGPGNRGKGAYQDRDKPAQIRFSNISAAKAVADAIRTSLGPKGMDKMIQDGKGDVTITNDGATILKQMQVLHPAARMLVELSKAQDIEAGDGTTSVVIIAGSLLDSCTKLLQKGIHPTIISESFQKALEKGLEILTDMSRPVQLSDRETLLNSATTSLNSKVVSQYSSLLSPMSVNAVMKVIDPATATSVDLRDIKIVKKLGGTIDDCELVEGLVLTQKVANSGITRVEKAKIGLIQFCLSAPKTDMDNQIVVSDYAQMDRVLREERAYILNLVKQIKKTGCNVLLIQKSILRDALSDLALHFLNKMKIMVVKDIEREDIEFICKTIGTKPVAHIDQFTPDMLGSAELAEEVSLNGSGKLFKITGCTSPGKTVTIVVRGSNKLVIEEAERSIHDALCVIRCLVKKRALIAGGGAPEIELALRLTEYSRTLSGMESYCVRAFADAMEVIPSTLAENAGLNPISTVTELRNRHAQGEKTTGINVRKGGISNILEEMVVQPLLVSVSALTLATETVRSILKIDDVVNTR</sequence>
<organism>
    <name type="scientific">Rattus norvegicus</name>
    <name type="common">Rat</name>
    <dbReference type="NCBI Taxonomy" id="10116"/>
    <lineage>
        <taxon>Eukaryota</taxon>
        <taxon>Metazoa</taxon>
        <taxon>Chordata</taxon>
        <taxon>Craniata</taxon>
        <taxon>Vertebrata</taxon>
        <taxon>Euteleostomi</taxon>
        <taxon>Mammalia</taxon>
        <taxon>Eutheria</taxon>
        <taxon>Euarchontoglires</taxon>
        <taxon>Glires</taxon>
        <taxon>Rodentia</taxon>
        <taxon>Myomorpha</taxon>
        <taxon>Muroidea</taxon>
        <taxon>Muridae</taxon>
        <taxon>Murinae</taxon>
        <taxon>Rattus</taxon>
    </lineage>
</organism>
<reference key="1">
    <citation type="journal article" date="2003" name="Hum. Mol. Genet.">
        <title>Hereditary sensory neuropathy is caused by a mutation in the delta subunit of the cytosolic chaperonin-containing T-complex peptide-1 (Cct4) gene.</title>
        <authorList>
            <person name="Lee M.J."/>
            <person name="Stephenson D.A."/>
            <person name="Groves M.J."/>
            <person name="Sweeney M.G."/>
            <person name="Davis M.B."/>
            <person name="An S.F."/>
            <person name="Houlden H."/>
            <person name="Salih M.A.M."/>
            <person name="Timmerman V."/>
            <person name="De Jonghe P."/>
            <person name="Auer-Grumbach M."/>
            <person name="Di Maria E."/>
            <person name="Scaravilli F."/>
            <person name="Wood N.W."/>
            <person name="Reilly M.M."/>
        </authorList>
    </citation>
    <scope>NUCLEOTIDE SEQUENCE [MRNA]</scope>
    <scope>VARIANT MF TYR-450</scope>
    <source>
        <strain>Sprague-Dawley</strain>
        <tissue>Liver</tissue>
    </source>
</reference>
<reference key="2">
    <citation type="journal article" date="2004" name="Genome Res.">
        <title>The status, quality, and expansion of the NIH full-length cDNA project: the Mammalian Gene Collection (MGC).</title>
        <authorList>
            <consortium name="The MGC Project Team"/>
        </authorList>
    </citation>
    <scope>NUCLEOTIDE SEQUENCE [LARGE SCALE MRNA]</scope>
    <source>
        <tissue>Testis</tissue>
    </source>
</reference>
<feature type="chain" id="PRO_0000128335" description="T-complex protein 1 subunit delta">
    <location>
        <begin position="1"/>
        <end position="539"/>
    </location>
</feature>
<feature type="region of interest" description="Disordered" evidence="3">
    <location>
        <begin position="1"/>
        <end position="28"/>
    </location>
</feature>
<feature type="binding site" evidence="1">
    <location>
        <position position="53"/>
    </location>
    <ligand>
        <name>ADP</name>
        <dbReference type="ChEBI" id="CHEBI:456216"/>
    </ligand>
</feature>
<feature type="binding site" evidence="1">
    <location>
        <position position="53"/>
    </location>
    <ligand>
        <name>ATP</name>
        <dbReference type="ChEBI" id="CHEBI:30616"/>
    </ligand>
</feature>
<feature type="binding site" evidence="1">
    <location>
        <position position="104"/>
    </location>
    <ligand>
        <name>Mg(2+)</name>
        <dbReference type="ChEBI" id="CHEBI:18420"/>
    </ligand>
</feature>
<feature type="binding site" evidence="1">
    <location>
        <position position="105"/>
    </location>
    <ligand>
        <name>ADP</name>
        <dbReference type="ChEBI" id="CHEBI:456216"/>
    </ligand>
</feature>
<feature type="binding site" evidence="1">
    <location>
        <position position="105"/>
    </location>
    <ligand>
        <name>ATP</name>
        <dbReference type="ChEBI" id="CHEBI:30616"/>
    </ligand>
</feature>
<feature type="binding site" evidence="1">
    <location>
        <position position="106"/>
    </location>
    <ligand>
        <name>ADP</name>
        <dbReference type="ChEBI" id="CHEBI:456216"/>
    </ligand>
</feature>
<feature type="binding site" evidence="1">
    <location>
        <position position="106"/>
    </location>
    <ligand>
        <name>ATP</name>
        <dbReference type="ChEBI" id="CHEBI:30616"/>
    </ligand>
</feature>
<feature type="binding site" evidence="1">
    <location>
        <position position="107"/>
    </location>
    <ligand>
        <name>ADP</name>
        <dbReference type="ChEBI" id="CHEBI:456216"/>
    </ligand>
</feature>
<feature type="binding site" evidence="1">
    <location>
        <position position="108"/>
    </location>
    <ligand>
        <name>ADP</name>
        <dbReference type="ChEBI" id="CHEBI:456216"/>
    </ligand>
</feature>
<feature type="binding site" evidence="1">
    <location>
        <position position="172"/>
    </location>
    <ligand>
        <name>ADP</name>
        <dbReference type="ChEBI" id="CHEBI:456216"/>
    </ligand>
</feature>
<feature type="binding site" evidence="1">
    <location>
        <position position="173"/>
    </location>
    <ligand>
        <name>ADP</name>
        <dbReference type="ChEBI" id="CHEBI:456216"/>
    </ligand>
</feature>
<feature type="binding site" evidence="1">
    <location>
        <position position="174"/>
    </location>
    <ligand>
        <name>ADP</name>
        <dbReference type="ChEBI" id="CHEBI:456216"/>
    </ligand>
</feature>
<feature type="binding site" evidence="1">
    <location>
        <position position="174"/>
    </location>
    <ligand>
        <name>ATP</name>
        <dbReference type="ChEBI" id="CHEBI:30616"/>
    </ligand>
</feature>
<feature type="binding site" evidence="1">
    <location>
        <position position="425"/>
    </location>
    <ligand>
        <name>ADP</name>
        <dbReference type="ChEBI" id="CHEBI:456216"/>
    </ligand>
</feature>
<feature type="binding site" evidence="1">
    <location>
        <position position="510"/>
    </location>
    <ligand>
        <name>ADP</name>
        <dbReference type="ChEBI" id="CHEBI:456216"/>
    </ligand>
</feature>
<feature type="modified residue" description="Omega-N-methylarginine" evidence="1">
    <location>
        <position position="19"/>
    </location>
</feature>
<feature type="modified residue" description="N6-acetyllysine" evidence="2">
    <location>
        <position position="21"/>
    </location>
</feature>
<feature type="modified residue" description="Phosphoserine" evidence="1">
    <location>
        <position position="36"/>
    </location>
</feature>
<feature type="modified residue" description="Phosphoserine" evidence="1">
    <location>
        <position position="184"/>
    </location>
</feature>
<feature type="modified residue" description="Phosphoserine" evidence="1">
    <location>
        <position position="202"/>
    </location>
</feature>
<feature type="modified residue" description="N6-acetyllysine" evidence="1">
    <location>
        <position position="288"/>
    </location>
</feature>
<feature type="modified residue" description="N6-acetyllysine" evidence="1">
    <location>
        <position position="302"/>
    </location>
</feature>
<feature type="modified residue" description="N6-acetyllysine" evidence="1">
    <location>
        <position position="319"/>
    </location>
</feature>
<feature type="modified residue" description="N6-acetyllysine" evidence="1">
    <location>
        <position position="326"/>
    </location>
</feature>
<feature type="modified residue" description="Phosphoserine" evidence="1">
    <location>
        <position position="444"/>
    </location>
</feature>
<feature type="sequence variant" description="In mf." evidence="4">
    <original>C</original>
    <variation>Y</variation>
    <location>
        <position position="450"/>
    </location>
</feature>
<proteinExistence type="evidence at protein level"/>
<name>TCPD_RAT</name>
<comment type="function">
    <text evidence="1">Component of the chaperonin-containing T-complex (TRiC), a molecular chaperone complex that assists the folding of actin, tubulin and other proteins upon ATP hydrolysis. The TRiC complex mediates the folding of WRAP53/TCAB1, thereby regulating telomere maintenance. As part of the TRiC complex may play a role in the assembly of BBSome, a complex involved in ciliogenesis regulating transports vesicles to the cilia.</text>
</comment>
<comment type="catalytic activity">
    <reaction evidence="1">
        <text>ATP + H2O = ADP + phosphate + H(+)</text>
        <dbReference type="Rhea" id="RHEA:13065"/>
        <dbReference type="ChEBI" id="CHEBI:15377"/>
        <dbReference type="ChEBI" id="CHEBI:15378"/>
        <dbReference type="ChEBI" id="CHEBI:30616"/>
        <dbReference type="ChEBI" id="CHEBI:43474"/>
        <dbReference type="ChEBI" id="CHEBI:456216"/>
    </reaction>
</comment>
<comment type="subunit">
    <text evidence="1 2">Component of the chaperonin-containing T-complex (TRiC), a hexadecamer composed of two identical back-to-back stacked rings enclosing a protein folding chamber. Each ring is made up of eight different subunits: TCP1/CCT1, CCT2, CCT3, CCT4, CCT5, CCT6A/CCT6, CCT7, CCT8. Interacts with PACRG (By similarity). Interacts with DNAAF4 (By similarity). Interacts with DLEC1 (By similarity).</text>
</comment>
<comment type="subcellular location">
    <subcellularLocation>
        <location evidence="1">Cytoplasm</location>
    </subcellularLocation>
    <subcellularLocation>
        <location evidence="1">Melanosome</location>
    </subcellularLocation>
    <subcellularLocation>
        <location evidence="1">Cytoplasm</location>
        <location evidence="1">Cytoskeleton</location>
        <location evidence="1">Microtubule organizing center</location>
        <location evidence="1">Centrosome</location>
    </subcellularLocation>
    <subcellularLocation>
        <location evidence="2">Cytoplasm</location>
        <location evidence="2">Cytoskeleton</location>
        <location evidence="2">Cilium basal body</location>
    </subcellularLocation>
</comment>
<comment type="disease">
    <text evidence="4">Defects in Cct4 are a cause of an early onset sensory neuropathy knowm as mutilated foot (mf). The main clinical features include ataxia, insensitivity to pain and foot ulceration. The pathological features include a severe reduction in the number of sensory ganglia and fibers.</text>
</comment>
<comment type="similarity">
    <text evidence="5">Belongs to the TCP-1 chaperonin family.</text>
</comment>
<evidence type="ECO:0000250" key="1">
    <source>
        <dbReference type="UniProtKB" id="P50991"/>
    </source>
</evidence>
<evidence type="ECO:0000250" key="2">
    <source>
        <dbReference type="UniProtKB" id="P80315"/>
    </source>
</evidence>
<evidence type="ECO:0000256" key="3">
    <source>
        <dbReference type="SAM" id="MobiDB-lite"/>
    </source>
</evidence>
<evidence type="ECO:0000269" key="4">
    <source>
    </source>
</evidence>
<evidence type="ECO:0000305" key="5"/>
<accession>Q7TPB1</accession>
<dbReference type="EC" id="3.6.1.-" evidence="1"/>
<dbReference type="EMBL" id="AY223861">
    <property type="protein sequence ID" value="AAP46161.1"/>
    <property type="molecule type" value="mRNA"/>
</dbReference>
<dbReference type="EMBL" id="BC079283">
    <property type="protein sequence ID" value="AAH79283.1"/>
    <property type="molecule type" value="mRNA"/>
</dbReference>
<dbReference type="RefSeq" id="NP_877966.1">
    <property type="nucleotide sequence ID" value="NM_182814.2"/>
</dbReference>
<dbReference type="SMR" id="Q7TPB1"/>
<dbReference type="BioGRID" id="248027">
    <property type="interactions" value="8"/>
</dbReference>
<dbReference type="FunCoup" id="Q7TPB1">
    <property type="interactions" value="4284"/>
</dbReference>
<dbReference type="IntAct" id="Q7TPB1">
    <property type="interactions" value="6"/>
</dbReference>
<dbReference type="MINT" id="Q7TPB1"/>
<dbReference type="STRING" id="10116.ENSRNOP00000012847"/>
<dbReference type="iPTMnet" id="Q7TPB1"/>
<dbReference type="PhosphoSitePlus" id="Q7TPB1"/>
<dbReference type="jPOST" id="Q7TPB1"/>
<dbReference type="PaxDb" id="10116-ENSRNOP00000012847"/>
<dbReference type="Ensembl" id="ENSRNOT00000012847.4">
    <property type="protein sequence ID" value="ENSRNOP00000012847.3"/>
    <property type="gene ID" value="ENSRNOG00000009642.4"/>
</dbReference>
<dbReference type="GeneID" id="29374"/>
<dbReference type="KEGG" id="rno:29374"/>
<dbReference type="UCSC" id="RGD:727937">
    <property type="organism name" value="rat"/>
</dbReference>
<dbReference type="AGR" id="RGD:727937"/>
<dbReference type="CTD" id="10575"/>
<dbReference type="RGD" id="727937">
    <property type="gene designation" value="Cct4"/>
</dbReference>
<dbReference type="eggNOG" id="KOG0358">
    <property type="taxonomic scope" value="Eukaryota"/>
</dbReference>
<dbReference type="GeneTree" id="ENSGT00550000074956"/>
<dbReference type="HOGENOM" id="CLU_008891_9_1_1"/>
<dbReference type="InParanoid" id="Q7TPB1"/>
<dbReference type="OMA" id="HPAANMI"/>
<dbReference type="OrthoDB" id="10248520at2759"/>
<dbReference type="PhylomeDB" id="Q7TPB1"/>
<dbReference type="TreeFam" id="TF106332"/>
<dbReference type="BRENDA" id="3.6.4.B10">
    <property type="organism ID" value="5301"/>
</dbReference>
<dbReference type="Reactome" id="R-RNO-390471">
    <property type="pathway name" value="Association of TriC/CCT with target proteins during biosynthesis"/>
</dbReference>
<dbReference type="Reactome" id="R-RNO-6814122">
    <property type="pathway name" value="Cooperation of PDCL (PhLP1) and TRiC/CCT in G-protein beta folding"/>
</dbReference>
<dbReference type="PRO" id="PR:Q7TPB1"/>
<dbReference type="Proteomes" id="UP000002494">
    <property type="component" value="Chromosome 14"/>
</dbReference>
<dbReference type="Bgee" id="ENSRNOG00000009642">
    <property type="expression patterns" value="Expressed in testis and 20 other cell types or tissues"/>
</dbReference>
<dbReference type="GO" id="GO:0044297">
    <property type="term" value="C:cell body"/>
    <property type="evidence" value="ECO:0000266"/>
    <property type="project" value="RGD"/>
</dbReference>
<dbReference type="GO" id="GO:0005813">
    <property type="term" value="C:centrosome"/>
    <property type="evidence" value="ECO:0000266"/>
    <property type="project" value="RGD"/>
</dbReference>
<dbReference type="GO" id="GO:0005832">
    <property type="term" value="C:chaperonin-containing T-complex"/>
    <property type="evidence" value="ECO:0000250"/>
    <property type="project" value="UniProtKB"/>
</dbReference>
<dbReference type="GO" id="GO:0005929">
    <property type="term" value="C:cilium"/>
    <property type="evidence" value="ECO:0007669"/>
    <property type="project" value="UniProtKB-KW"/>
</dbReference>
<dbReference type="GO" id="GO:0042470">
    <property type="term" value="C:melanosome"/>
    <property type="evidence" value="ECO:0007669"/>
    <property type="project" value="UniProtKB-SubCell"/>
</dbReference>
<dbReference type="GO" id="GO:0005874">
    <property type="term" value="C:microtubule"/>
    <property type="evidence" value="ECO:0000266"/>
    <property type="project" value="RGD"/>
</dbReference>
<dbReference type="GO" id="GO:0005654">
    <property type="term" value="C:nucleoplasm"/>
    <property type="evidence" value="ECO:0007669"/>
    <property type="project" value="Ensembl"/>
</dbReference>
<dbReference type="GO" id="GO:0002199">
    <property type="term" value="C:zona pellucida receptor complex"/>
    <property type="evidence" value="ECO:0000266"/>
    <property type="project" value="RGD"/>
</dbReference>
<dbReference type="GO" id="GO:0005524">
    <property type="term" value="F:ATP binding"/>
    <property type="evidence" value="ECO:0007669"/>
    <property type="project" value="UniProtKB-KW"/>
</dbReference>
<dbReference type="GO" id="GO:0016887">
    <property type="term" value="F:ATP hydrolysis activity"/>
    <property type="evidence" value="ECO:0007669"/>
    <property type="project" value="InterPro"/>
</dbReference>
<dbReference type="GO" id="GO:0140662">
    <property type="term" value="F:ATP-dependent protein folding chaperone"/>
    <property type="evidence" value="ECO:0007669"/>
    <property type="project" value="InterPro"/>
</dbReference>
<dbReference type="GO" id="GO:0044183">
    <property type="term" value="F:protein folding chaperone"/>
    <property type="evidence" value="ECO:0000266"/>
    <property type="project" value="RGD"/>
</dbReference>
<dbReference type="GO" id="GO:0051082">
    <property type="term" value="F:unfolded protein binding"/>
    <property type="evidence" value="ECO:0000318"/>
    <property type="project" value="GO_Central"/>
</dbReference>
<dbReference type="GO" id="GO:0007339">
    <property type="term" value="P:binding of sperm to zona pellucida"/>
    <property type="evidence" value="ECO:0000266"/>
    <property type="project" value="RGD"/>
</dbReference>
<dbReference type="GO" id="GO:0051086">
    <property type="term" value="P:chaperone mediated protein folding independent of cofactor"/>
    <property type="evidence" value="ECO:0000266"/>
    <property type="project" value="RGD"/>
</dbReference>
<dbReference type="GO" id="GO:0061077">
    <property type="term" value="P:chaperone-mediated protein folding"/>
    <property type="evidence" value="ECO:0000266"/>
    <property type="project" value="RGD"/>
</dbReference>
<dbReference type="GO" id="GO:1904874">
    <property type="term" value="P:positive regulation of telomerase RNA localization to Cajal body"/>
    <property type="evidence" value="ECO:0000266"/>
    <property type="project" value="RGD"/>
</dbReference>
<dbReference type="GO" id="GO:0032212">
    <property type="term" value="P:positive regulation of telomere maintenance via telomerase"/>
    <property type="evidence" value="ECO:0000266"/>
    <property type="project" value="RGD"/>
</dbReference>
<dbReference type="GO" id="GO:0006457">
    <property type="term" value="P:protein folding"/>
    <property type="evidence" value="ECO:0000266"/>
    <property type="project" value="RGD"/>
</dbReference>
<dbReference type="GO" id="GO:0050821">
    <property type="term" value="P:protein stabilization"/>
    <property type="evidence" value="ECO:0000266"/>
    <property type="project" value="RGD"/>
</dbReference>
<dbReference type="GO" id="GO:0090666">
    <property type="term" value="P:scaRNA localization to Cajal body"/>
    <property type="evidence" value="ECO:0000266"/>
    <property type="project" value="RGD"/>
</dbReference>
<dbReference type="CDD" id="cd03338">
    <property type="entry name" value="TCP1_delta"/>
    <property type="match status" value="1"/>
</dbReference>
<dbReference type="FunFam" id="3.50.7.10:FF:000010">
    <property type="entry name" value="T-complex protein 1 subunit delta"/>
    <property type="match status" value="1"/>
</dbReference>
<dbReference type="Gene3D" id="3.50.7.10">
    <property type="entry name" value="GroEL"/>
    <property type="match status" value="1"/>
</dbReference>
<dbReference type="Gene3D" id="1.10.560.10">
    <property type="entry name" value="GroEL-like equatorial domain"/>
    <property type="match status" value="1"/>
</dbReference>
<dbReference type="Gene3D" id="3.30.260.10">
    <property type="entry name" value="TCP-1-like chaperonin intermediate domain"/>
    <property type="match status" value="1"/>
</dbReference>
<dbReference type="InterPro" id="IPR012717">
    <property type="entry name" value="Chap_CCT_delta"/>
</dbReference>
<dbReference type="InterPro" id="IPR017998">
    <property type="entry name" value="Chaperone_TCP-1"/>
</dbReference>
<dbReference type="InterPro" id="IPR002194">
    <property type="entry name" value="Chaperonin_TCP-1_CS"/>
</dbReference>
<dbReference type="InterPro" id="IPR002423">
    <property type="entry name" value="Cpn60/GroEL/TCP-1"/>
</dbReference>
<dbReference type="InterPro" id="IPR027409">
    <property type="entry name" value="GroEL-like_apical_dom_sf"/>
</dbReference>
<dbReference type="InterPro" id="IPR027413">
    <property type="entry name" value="GROEL-like_equatorial_sf"/>
</dbReference>
<dbReference type="InterPro" id="IPR027410">
    <property type="entry name" value="TCP-1-like_intermed_sf"/>
</dbReference>
<dbReference type="InterPro" id="IPR053374">
    <property type="entry name" value="TCP-1_chaperonin"/>
</dbReference>
<dbReference type="InterPro" id="IPR054827">
    <property type="entry name" value="thermosome_alpha"/>
</dbReference>
<dbReference type="NCBIfam" id="TIGR02342">
    <property type="entry name" value="chap_CCT_delta"/>
    <property type="match status" value="1"/>
</dbReference>
<dbReference type="NCBIfam" id="NF041082">
    <property type="entry name" value="thermosome_alpha"/>
    <property type="match status" value="1"/>
</dbReference>
<dbReference type="NCBIfam" id="NF041083">
    <property type="entry name" value="thermosome_beta"/>
    <property type="match status" value="1"/>
</dbReference>
<dbReference type="PANTHER" id="PTHR11353">
    <property type="entry name" value="CHAPERONIN"/>
    <property type="match status" value="1"/>
</dbReference>
<dbReference type="Pfam" id="PF00118">
    <property type="entry name" value="Cpn60_TCP1"/>
    <property type="match status" value="1"/>
</dbReference>
<dbReference type="PRINTS" id="PR00304">
    <property type="entry name" value="TCOMPLEXTCP1"/>
</dbReference>
<dbReference type="SUPFAM" id="SSF52029">
    <property type="entry name" value="GroEL apical domain-like"/>
    <property type="match status" value="1"/>
</dbReference>
<dbReference type="SUPFAM" id="SSF48592">
    <property type="entry name" value="GroEL equatorial domain-like"/>
    <property type="match status" value="1"/>
</dbReference>
<dbReference type="SUPFAM" id="SSF54849">
    <property type="entry name" value="GroEL-intermediate domain like"/>
    <property type="match status" value="1"/>
</dbReference>
<dbReference type="PROSITE" id="PS00750">
    <property type="entry name" value="TCP1_1"/>
    <property type="match status" value="1"/>
</dbReference>
<dbReference type="PROSITE" id="PS00751">
    <property type="entry name" value="TCP1_2"/>
    <property type="match status" value="1"/>
</dbReference>
<dbReference type="PROSITE" id="PS00995">
    <property type="entry name" value="TCP1_3"/>
    <property type="match status" value="1"/>
</dbReference>
<protein>
    <recommendedName>
        <fullName>T-complex protein 1 subunit delta</fullName>
        <shortName>TCP-1-delta</shortName>
        <ecNumber evidence="1">3.6.1.-</ecNumber>
    </recommendedName>
    <alternativeName>
        <fullName>CCT-delta</fullName>
    </alternativeName>
</protein>
<gene>
    <name type="primary">Cct4</name>
</gene>
<keyword id="KW-0007">Acetylation</keyword>
<keyword id="KW-0067">ATP-binding</keyword>
<keyword id="KW-0966">Cell projection</keyword>
<keyword id="KW-0143">Chaperone</keyword>
<keyword id="KW-0969">Cilium</keyword>
<keyword id="KW-0963">Cytoplasm</keyword>
<keyword id="KW-0206">Cytoskeleton</keyword>
<keyword id="KW-0225">Disease variant</keyword>
<keyword id="KW-0378">Hydrolase</keyword>
<keyword id="KW-0460">Magnesium</keyword>
<keyword id="KW-0479">Metal-binding</keyword>
<keyword id="KW-0488">Methylation</keyword>
<keyword id="KW-0547">Nucleotide-binding</keyword>
<keyword id="KW-0597">Phosphoprotein</keyword>
<keyword id="KW-1185">Reference proteome</keyword>